<protein>
    <recommendedName>
        <fullName evidence="1">ATP synthase epsilon chain</fullName>
    </recommendedName>
    <alternativeName>
        <fullName evidence="1">ATP synthase F1 sector epsilon subunit</fullName>
    </alternativeName>
    <alternativeName>
        <fullName evidence="1">F-ATPase epsilon subunit</fullName>
    </alternativeName>
</protein>
<name>ATPE_LARHH</name>
<gene>
    <name evidence="1" type="primary">atpC</name>
    <name type="ordered locus">LHK_03000</name>
</gene>
<organism>
    <name type="scientific">Laribacter hongkongensis (strain HLHK9)</name>
    <dbReference type="NCBI Taxonomy" id="557598"/>
    <lineage>
        <taxon>Bacteria</taxon>
        <taxon>Pseudomonadati</taxon>
        <taxon>Pseudomonadota</taxon>
        <taxon>Betaproteobacteria</taxon>
        <taxon>Neisseriales</taxon>
        <taxon>Aquaspirillaceae</taxon>
        <taxon>Laribacter</taxon>
    </lineage>
</organism>
<evidence type="ECO:0000255" key="1">
    <source>
        <dbReference type="HAMAP-Rule" id="MF_00530"/>
    </source>
</evidence>
<sequence>MSTMHVEVVSAEAQIYSGEAEFLVAPGEMGELGVYPRHVPLLTRIKPGPLRIRVPGQAEEVIVAVSGGLMEVQPDAITVLADVAVRGDEIDEARAEAAKKAAEAALEKATDDRETAAARQALKTAIAELKALDYLRRRVH</sequence>
<accession>C1D5G1</accession>
<proteinExistence type="inferred from homology"/>
<reference key="1">
    <citation type="journal article" date="2009" name="PLoS Genet.">
        <title>The complete genome and proteome of Laribacter hongkongensis reveal potential mechanisms for adaptations to different temperatures and habitats.</title>
        <authorList>
            <person name="Woo P.C.Y."/>
            <person name="Lau S.K.P."/>
            <person name="Tse H."/>
            <person name="Teng J.L.L."/>
            <person name="Curreem S.O."/>
            <person name="Tsang A.K.L."/>
            <person name="Fan R.Y.Y."/>
            <person name="Wong G.K.M."/>
            <person name="Huang Y."/>
            <person name="Loman N.J."/>
            <person name="Snyder L.A.S."/>
            <person name="Cai J.J."/>
            <person name="Huang J.-D."/>
            <person name="Mak W."/>
            <person name="Pallen M.J."/>
            <person name="Lok S."/>
            <person name="Yuen K.-Y."/>
        </authorList>
    </citation>
    <scope>NUCLEOTIDE SEQUENCE [LARGE SCALE GENOMIC DNA]</scope>
    <source>
        <strain>HLHK9</strain>
    </source>
</reference>
<dbReference type="EMBL" id="CP001154">
    <property type="protein sequence ID" value="ACO75978.1"/>
    <property type="molecule type" value="Genomic_DNA"/>
</dbReference>
<dbReference type="RefSeq" id="WP_012698441.1">
    <property type="nucleotide sequence ID" value="NC_012559.1"/>
</dbReference>
<dbReference type="SMR" id="C1D5G1"/>
<dbReference type="STRING" id="557598.LHK_03000"/>
<dbReference type="KEGG" id="lhk:LHK_03000"/>
<dbReference type="eggNOG" id="COG0355">
    <property type="taxonomic scope" value="Bacteria"/>
</dbReference>
<dbReference type="HOGENOM" id="CLU_084338_2_0_4"/>
<dbReference type="Proteomes" id="UP000002010">
    <property type="component" value="Chromosome"/>
</dbReference>
<dbReference type="GO" id="GO:0005886">
    <property type="term" value="C:plasma membrane"/>
    <property type="evidence" value="ECO:0007669"/>
    <property type="project" value="UniProtKB-SubCell"/>
</dbReference>
<dbReference type="GO" id="GO:0045259">
    <property type="term" value="C:proton-transporting ATP synthase complex"/>
    <property type="evidence" value="ECO:0007669"/>
    <property type="project" value="UniProtKB-KW"/>
</dbReference>
<dbReference type="GO" id="GO:0005524">
    <property type="term" value="F:ATP binding"/>
    <property type="evidence" value="ECO:0007669"/>
    <property type="project" value="UniProtKB-UniRule"/>
</dbReference>
<dbReference type="GO" id="GO:0046933">
    <property type="term" value="F:proton-transporting ATP synthase activity, rotational mechanism"/>
    <property type="evidence" value="ECO:0007669"/>
    <property type="project" value="UniProtKB-UniRule"/>
</dbReference>
<dbReference type="CDD" id="cd12152">
    <property type="entry name" value="F1-ATPase_delta"/>
    <property type="match status" value="1"/>
</dbReference>
<dbReference type="FunFam" id="2.60.15.10:FF:000001">
    <property type="entry name" value="ATP synthase epsilon chain"/>
    <property type="match status" value="1"/>
</dbReference>
<dbReference type="Gene3D" id="2.60.15.10">
    <property type="entry name" value="F0F1 ATP synthase delta/epsilon subunit, N-terminal"/>
    <property type="match status" value="1"/>
</dbReference>
<dbReference type="HAMAP" id="MF_00530">
    <property type="entry name" value="ATP_synth_epsil_bac"/>
    <property type="match status" value="1"/>
</dbReference>
<dbReference type="InterPro" id="IPR036794">
    <property type="entry name" value="ATP_F1_dsu/esu_C_sf"/>
</dbReference>
<dbReference type="InterPro" id="IPR001469">
    <property type="entry name" value="ATP_synth_F1_dsu/esu"/>
</dbReference>
<dbReference type="InterPro" id="IPR020546">
    <property type="entry name" value="ATP_synth_F1_dsu/esu_N"/>
</dbReference>
<dbReference type="InterPro" id="IPR020547">
    <property type="entry name" value="ATP_synth_F1_esu_C"/>
</dbReference>
<dbReference type="InterPro" id="IPR036771">
    <property type="entry name" value="ATPsynth_dsu/esu_N"/>
</dbReference>
<dbReference type="NCBIfam" id="TIGR01216">
    <property type="entry name" value="ATP_synt_epsi"/>
    <property type="match status" value="1"/>
</dbReference>
<dbReference type="NCBIfam" id="NF001847">
    <property type="entry name" value="PRK00571.1-4"/>
    <property type="match status" value="1"/>
</dbReference>
<dbReference type="PANTHER" id="PTHR13822">
    <property type="entry name" value="ATP SYNTHASE DELTA/EPSILON CHAIN"/>
    <property type="match status" value="1"/>
</dbReference>
<dbReference type="PANTHER" id="PTHR13822:SF10">
    <property type="entry name" value="ATP SYNTHASE EPSILON CHAIN, CHLOROPLASTIC"/>
    <property type="match status" value="1"/>
</dbReference>
<dbReference type="Pfam" id="PF00401">
    <property type="entry name" value="ATP-synt_DE"/>
    <property type="match status" value="1"/>
</dbReference>
<dbReference type="Pfam" id="PF02823">
    <property type="entry name" value="ATP-synt_DE_N"/>
    <property type="match status" value="1"/>
</dbReference>
<dbReference type="SUPFAM" id="SSF46604">
    <property type="entry name" value="Epsilon subunit of F1F0-ATP synthase C-terminal domain"/>
    <property type="match status" value="1"/>
</dbReference>
<dbReference type="SUPFAM" id="SSF51344">
    <property type="entry name" value="Epsilon subunit of F1F0-ATP synthase N-terminal domain"/>
    <property type="match status" value="1"/>
</dbReference>
<keyword id="KW-0066">ATP synthesis</keyword>
<keyword id="KW-0997">Cell inner membrane</keyword>
<keyword id="KW-1003">Cell membrane</keyword>
<keyword id="KW-0139">CF(1)</keyword>
<keyword id="KW-0375">Hydrogen ion transport</keyword>
<keyword id="KW-0406">Ion transport</keyword>
<keyword id="KW-0472">Membrane</keyword>
<keyword id="KW-1185">Reference proteome</keyword>
<keyword id="KW-0813">Transport</keyword>
<comment type="function">
    <text evidence="1">Produces ATP from ADP in the presence of a proton gradient across the membrane.</text>
</comment>
<comment type="subunit">
    <text evidence="1">F-type ATPases have 2 components, CF(1) - the catalytic core - and CF(0) - the membrane proton channel. CF(1) has five subunits: alpha(3), beta(3), gamma(1), delta(1), epsilon(1). CF(0) has three main subunits: a, b and c.</text>
</comment>
<comment type="subcellular location">
    <subcellularLocation>
        <location evidence="1">Cell inner membrane</location>
        <topology evidence="1">Peripheral membrane protein</topology>
    </subcellularLocation>
</comment>
<comment type="similarity">
    <text evidence="1">Belongs to the ATPase epsilon chain family.</text>
</comment>
<feature type="chain" id="PRO_1000146334" description="ATP synthase epsilon chain">
    <location>
        <begin position="1"/>
        <end position="140"/>
    </location>
</feature>